<feature type="signal peptide" evidence="2">
    <location>
        <begin position="1"/>
        <end position="24"/>
    </location>
</feature>
<feature type="propeptide" id="PRO_0000028636" evidence="1">
    <location>
        <begin position="25"/>
        <end position="204"/>
    </location>
</feature>
<feature type="chain" id="PRO_0000028637" description="Zinc metalloproteinase MspA">
    <location>
        <begin position="205"/>
        <end position="529"/>
    </location>
</feature>
<feature type="active site" evidence="3">
    <location>
        <position position="366"/>
    </location>
</feature>
<feature type="active site" description="Proton donor" evidence="3">
    <location>
        <position position="451"/>
    </location>
</feature>
<feature type="binding site" evidence="3">
    <location>
        <position position="365"/>
    </location>
    <ligand>
        <name>Zn(2+)</name>
        <dbReference type="ChEBI" id="CHEBI:29105"/>
        <note>catalytic</note>
    </ligand>
</feature>
<feature type="binding site" evidence="3">
    <location>
        <position position="369"/>
    </location>
    <ligand>
        <name>Zn(2+)</name>
        <dbReference type="ChEBI" id="CHEBI:29105"/>
        <note>catalytic</note>
    </ligand>
</feature>
<feature type="binding site" evidence="3">
    <location>
        <position position="389"/>
    </location>
    <ligand>
        <name>Zn(2+)</name>
        <dbReference type="ChEBI" id="CHEBI:29105"/>
        <note>catalytic</note>
    </ligand>
</feature>
<reference key="1">
    <citation type="submission" date="1995-03" db="EMBL/GenBank/DDBJ databases">
        <title>Identification, characterization and distribution of an analogue of the Legionella pneumophila major secretory protein in L. longbeachae.</title>
        <authorList>
            <person name="Lim I.S.L."/>
            <person name="Olesnicky N."/>
            <person name="Heuzenroeder M.W."/>
        </authorList>
    </citation>
    <scope>NUCLEOTIDE SEQUENCE [GENOMIC DNA]</scope>
    <source>
        <strain>ATCC 33462 / DSM 10572 / NCTC 11477 / Long Beach 4 / Serogroup 1</strain>
    </source>
</reference>
<accession>P55110</accession>
<gene>
    <name type="primary">mspA</name>
</gene>
<protein>
    <recommendedName>
        <fullName>Zinc metalloproteinase MspA</fullName>
        <ecNumber>3.4.24.-</ecNumber>
    </recommendedName>
</protein>
<proteinExistence type="inferred from homology"/>
<keyword id="KW-0378">Hydrolase</keyword>
<keyword id="KW-0479">Metal-binding</keyword>
<keyword id="KW-0482">Metalloprotease</keyword>
<keyword id="KW-0645">Protease</keyword>
<keyword id="KW-0732">Signal</keyword>
<keyword id="KW-0862">Zinc</keyword>
<keyword id="KW-0865">Zymogen</keyword>
<comment type="cofactor">
    <cofactor evidence="1">
        <name>Zn(2+)</name>
        <dbReference type="ChEBI" id="CHEBI:29105"/>
    </cofactor>
    <text evidence="1">Binds 1 zinc ion.</text>
</comment>
<comment type="similarity">
    <text evidence="4">Belongs to the peptidase M4 family.</text>
</comment>
<organism>
    <name type="scientific">Legionella longbeachae</name>
    <dbReference type="NCBI Taxonomy" id="450"/>
    <lineage>
        <taxon>Bacteria</taxon>
        <taxon>Pseudomonadati</taxon>
        <taxon>Pseudomonadota</taxon>
        <taxon>Gammaproteobacteria</taxon>
        <taxon>Legionellales</taxon>
        <taxon>Legionellaceae</taxon>
        <taxon>Legionella</taxon>
    </lineage>
</organism>
<sequence length="529" mass="58713">MHHNYYLSPLAVALALGMVSPAKAADPILLQNASFSEVKQKFALSTQGVAVAKDSLSFVSEHTDRNKVTHVRMQQKYVGFPVYGGYAIMHSMNTAKSLAATTQSTVEMNGVVYQGLQTELGQPDASFVQNADKALQQFKAKYANQNVGDEKVIPMVYIDKDNQAHWAYKVSIRVNHLDKAPERPTAIIDARTQQPFVQWNDIKTERVSVKGSGFGGNKKMGYYEFGKDFPYLDLTRDANNATCYMENESVKVIDMKHKYSSVKAAMSFACSTTDSDIYSTGYREDNGALSPSNDALYAGYVIKHMYTDWYGVNVLSNSNGSPMQLVMRVHYGDGYENAYWDGEQMTFGCGDRMMYPLVSLGVGAHEISHGFTEQHSGLEYYGQSGGMNESFSDMAAQAAEHYSVGKSSWQIGGEIMKESSGYDALRYMDKPSRDGESIDTADEYYSGLDVHYSSGVYNHLFYILATKPNWDTRKAFDVMVKANMDYWTPYSSFDEGGCGVLSAAKDLGFSLNDVKSSLQAVAINYSKCH</sequence>
<evidence type="ECO:0000250" key="1"/>
<evidence type="ECO:0000255" key="2"/>
<evidence type="ECO:0000255" key="3">
    <source>
        <dbReference type="PROSITE-ProRule" id="PRU10095"/>
    </source>
</evidence>
<evidence type="ECO:0000305" key="4"/>
<dbReference type="EC" id="3.4.24.-"/>
<dbReference type="EMBL" id="X83035">
    <property type="protein sequence ID" value="CAA58144.1"/>
    <property type="molecule type" value="Genomic_DNA"/>
</dbReference>
<dbReference type="PIR" id="S52759">
    <property type="entry name" value="S52759"/>
</dbReference>
<dbReference type="SMR" id="P55110"/>
<dbReference type="MEROPS" id="M04.006"/>
<dbReference type="OMA" id="QIDWESA"/>
<dbReference type="GO" id="GO:0046872">
    <property type="term" value="F:metal ion binding"/>
    <property type="evidence" value="ECO:0007669"/>
    <property type="project" value="UniProtKB-KW"/>
</dbReference>
<dbReference type="GO" id="GO:0004222">
    <property type="term" value="F:metalloendopeptidase activity"/>
    <property type="evidence" value="ECO:0007669"/>
    <property type="project" value="InterPro"/>
</dbReference>
<dbReference type="GO" id="GO:0006508">
    <property type="term" value="P:proteolysis"/>
    <property type="evidence" value="ECO:0007669"/>
    <property type="project" value="UniProtKB-KW"/>
</dbReference>
<dbReference type="CDD" id="cd09597">
    <property type="entry name" value="M4_TLP"/>
    <property type="match status" value="1"/>
</dbReference>
<dbReference type="Gene3D" id="3.10.170.10">
    <property type="match status" value="1"/>
</dbReference>
<dbReference type="Gene3D" id="3.10.450.40">
    <property type="match status" value="1"/>
</dbReference>
<dbReference type="Gene3D" id="3.10.450.490">
    <property type="match status" value="1"/>
</dbReference>
<dbReference type="Gene3D" id="1.10.390.10">
    <property type="entry name" value="Neutral Protease Domain 2"/>
    <property type="match status" value="1"/>
</dbReference>
<dbReference type="InterPro" id="IPR011096">
    <property type="entry name" value="FTP_domain"/>
</dbReference>
<dbReference type="InterPro" id="IPR023612">
    <property type="entry name" value="Peptidase_M4"/>
</dbReference>
<dbReference type="InterPro" id="IPR027268">
    <property type="entry name" value="Peptidase_M4/M1_CTD_sf"/>
</dbReference>
<dbReference type="InterPro" id="IPR001570">
    <property type="entry name" value="Peptidase_M4_C_domain"/>
</dbReference>
<dbReference type="InterPro" id="IPR013856">
    <property type="entry name" value="Peptidase_M4_domain"/>
</dbReference>
<dbReference type="InterPro" id="IPR050728">
    <property type="entry name" value="Zinc_Metalloprotease_M4"/>
</dbReference>
<dbReference type="NCBIfam" id="NF045902">
    <property type="entry name" value="MetaloprotProALeg"/>
    <property type="match status" value="1"/>
</dbReference>
<dbReference type="PANTHER" id="PTHR33794">
    <property type="entry name" value="BACILLOLYSIN"/>
    <property type="match status" value="1"/>
</dbReference>
<dbReference type="PANTHER" id="PTHR33794:SF1">
    <property type="entry name" value="BACILLOLYSIN"/>
    <property type="match status" value="1"/>
</dbReference>
<dbReference type="Pfam" id="PF07504">
    <property type="entry name" value="FTP"/>
    <property type="match status" value="1"/>
</dbReference>
<dbReference type="Pfam" id="PF01447">
    <property type="entry name" value="Peptidase_M4"/>
    <property type="match status" value="1"/>
</dbReference>
<dbReference type="Pfam" id="PF02868">
    <property type="entry name" value="Peptidase_M4_C"/>
    <property type="match status" value="1"/>
</dbReference>
<dbReference type="PRINTS" id="PR00730">
    <property type="entry name" value="THERMOLYSIN"/>
</dbReference>
<dbReference type="SUPFAM" id="SSF55486">
    <property type="entry name" value="Metalloproteases ('zincins'), catalytic domain"/>
    <property type="match status" value="1"/>
</dbReference>
<dbReference type="PROSITE" id="PS00142">
    <property type="entry name" value="ZINC_PROTEASE"/>
    <property type="match status" value="1"/>
</dbReference>
<name>MSPA_LEGLO</name>